<organism>
    <name type="scientific">Salmonella paratyphi A (strain AKU_12601)</name>
    <dbReference type="NCBI Taxonomy" id="554290"/>
    <lineage>
        <taxon>Bacteria</taxon>
        <taxon>Pseudomonadati</taxon>
        <taxon>Pseudomonadota</taxon>
        <taxon>Gammaproteobacteria</taxon>
        <taxon>Enterobacterales</taxon>
        <taxon>Enterobacteriaceae</taxon>
        <taxon>Salmonella</taxon>
    </lineage>
</organism>
<dbReference type="EMBL" id="FM200053">
    <property type="protein sequence ID" value="CAR59578.1"/>
    <property type="molecule type" value="Genomic_DNA"/>
</dbReference>
<dbReference type="RefSeq" id="WP_000124850.1">
    <property type="nucleotide sequence ID" value="NC_011147.1"/>
</dbReference>
<dbReference type="SMR" id="B5BA39"/>
<dbReference type="GeneID" id="98388757"/>
<dbReference type="KEGG" id="sek:SSPA1399"/>
<dbReference type="HOGENOM" id="CLU_123265_0_1_6"/>
<dbReference type="Proteomes" id="UP000001869">
    <property type="component" value="Chromosome"/>
</dbReference>
<dbReference type="GO" id="GO:1990904">
    <property type="term" value="C:ribonucleoprotein complex"/>
    <property type="evidence" value="ECO:0007669"/>
    <property type="project" value="UniProtKB-KW"/>
</dbReference>
<dbReference type="GO" id="GO:0005840">
    <property type="term" value="C:ribosome"/>
    <property type="evidence" value="ECO:0007669"/>
    <property type="project" value="UniProtKB-KW"/>
</dbReference>
<dbReference type="GO" id="GO:0019843">
    <property type="term" value="F:rRNA binding"/>
    <property type="evidence" value="ECO:0007669"/>
    <property type="project" value="UniProtKB-UniRule"/>
</dbReference>
<dbReference type="GO" id="GO:0003735">
    <property type="term" value="F:structural constituent of ribosome"/>
    <property type="evidence" value="ECO:0007669"/>
    <property type="project" value="InterPro"/>
</dbReference>
<dbReference type="GO" id="GO:0000027">
    <property type="term" value="P:ribosomal large subunit assembly"/>
    <property type="evidence" value="ECO:0007669"/>
    <property type="project" value="UniProtKB-UniRule"/>
</dbReference>
<dbReference type="GO" id="GO:0006412">
    <property type="term" value="P:translation"/>
    <property type="evidence" value="ECO:0007669"/>
    <property type="project" value="InterPro"/>
</dbReference>
<dbReference type="CDD" id="cd07026">
    <property type="entry name" value="Ribosomal_L20"/>
    <property type="match status" value="1"/>
</dbReference>
<dbReference type="FunFam" id="1.10.1900.20:FF:000001">
    <property type="entry name" value="50S ribosomal protein L20"/>
    <property type="match status" value="1"/>
</dbReference>
<dbReference type="Gene3D" id="6.10.160.10">
    <property type="match status" value="1"/>
</dbReference>
<dbReference type="Gene3D" id="1.10.1900.20">
    <property type="entry name" value="Ribosomal protein L20"/>
    <property type="match status" value="1"/>
</dbReference>
<dbReference type="HAMAP" id="MF_00382">
    <property type="entry name" value="Ribosomal_bL20"/>
    <property type="match status" value="1"/>
</dbReference>
<dbReference type="InterPro" id="IPR005813">
    <property type="entry name" value="Ribosomal_bL20"/>
</dbReference>
<dbReference type="InterPro" id="IPR049946">
    <property type="entry name" value="RIBOSOMAL_L20_CS"/>
</dbReference>
<dbReference type="InterPro" id="IPR035566">
    <property type="entry name" value="Ribosomal_protein_bL20_C"/>
</dbReference>
<dbReference type="NCBIfam" id="TIGR01032">
    <property type="entry name" value="rplT_bact"/>
    <property type="match status" value="1"/>
</dbReference>
<dbReference type="PANTHER" id="PTHR10986">
    <property type="entry name" value="39S RIBOSOMAL PROTEIN L20"/>
    <property type="match status" value="1"/>
</dbReference>
<dbReference type="Pfam" id="PF00453">
    <property type="entry name" value="Ribosomal_L20"/>
    <property type="match status" value="1"/>
</dbReference>
<dbReference type="PRINTS" id="PR00062">
    <property type="entry name" value="RIBOSOMALL20"/>
</dbReference>
<dbReference type="SUPFAM" id="SSF74731">
    <property type="entry name" value="Ribosomal protein L20"/>
    <property type="match status" value="1"/>
</dbReference>
<dbReference type="PROSITE" id="PS00937">
    <property type="entry name" value="RIBOSOMAL_L20"/>
    <property type="match status" value="1"/>
</dbReference>
<name>RL20_SALPK</name>
<feature type="chain" id="PRO_1000122369" description="Large ribosomal subunit protein bL20">
    <location>
        <begin position="1"/>
        <end position="118"/>
    </location>
</feature>
<protein>
    <recommendedName>
        <fullName evidence="1">Large ribosomal subunit protein bL20</fullName>
    </recommendedName>
    <alternativeName>
        <fullName evidence="2">50S ribosomal protein L20</fullName>
    </alternativeName>
</protein>
<proteinExistence type="inferred from homology"/>
<comment type="function">
    <text evidence="1">Binds directly to 23S ribosomal RNA and is necessary for the in vitro assembly process of the 50S ribosomal subunit. It is not involved in the protein synthesizing functions of that subunit.</text>
</comment>
<comment type="similarity">
    <text evidence="1">Belongs to the bacterial ribosomal protein bL20 family.</text>
</comment>
<accession>B5BA39</accession>
<sequence length="118" mass="13497">MARVKRGVIARARHKKILKQAKGYYGARSRVYRVAFQAVIKAGQYAYRDRRQRKRQFRQLWIARINAAARQNGISYSKFINGLKKASVEIDRKILADIAVFDKVAFTALVEKAKAALA</sequence>
<gene>
    <name evidence="1" type="primary">rplT</name>
    <name type="ordered locus">SSPA1399</name>
</gene>
<evidence type="ECO:0000255" key="1">
    <source>
        <dbReference type="HAMAP-Rule" id="MF_00382"/>
    </source>
</evidence>
<evidence type="ECO:0000305" key="2"/>
<keyword id="KW-0687">Ribonucleoprotein</keyword>
<keyword id="KW-0689">Ribosomal protein</keyword>
<keyword id="KW-0694">RNA-binding</keyword>
<keyword id="KW-0699">rRNA-binding</keyword>
<reference key="1">
    <citation type="journal article" date="2009" name="BMC Genomics">
        <title>Pseudogene accumulation in the evolutionary histories of Salmonella enterica serovars Paratyphi A and Typhi.</title>
        <authorList>
            <person name="Holt K.E."/>
            <person name="Thomson N.R."/>
            <person name="Wain J."/>
            <person name="Langridge G.C."/>
            <person name="Hasan R."/>
            <person name="Bhutta Z.A."/>
            <person name="Quail M.A."/>
            <person name="Norbertczak H."/>
            <person name="Walker D."/>
            <person name="Simmonds M."/>
            <person name="White B."/>
            <person name="Bason N."/>
            <person name="Mungall K."/>
            <person name="Dougan G."/>
            <person name="Parkhill J."/>
        </authorList>
    </citation>
    <scope>NUCLEOTIDE SEQUENCE [LARGE SCALE GENOMIC DNA]</scope>
    <source>
        <strain>AKU_12601</strain>
    </source>
</reference>